<reference evidence="4" key="1">
    <citation type="journal article" date="2017" name="PLoS ONE">
        <title>The Greenland shark Somniosus microcephalus-Hemoglobins and ligand-binding properties.</title>
        <authorList>
            <person name="Russo R."/>
            <person name="Giordano D."/>
            <person name="Paredi G."/>
            <person name="Marchesani F."/>
            <person name="Milazzo L."/>
            <person name="Altomonte G."/>
            <person name="Del Canale P."/>
            <person name="Abbruzzetti S."/>
            <person name="Ascenzi P."/>
            <person name="di Prisco G."/>
            <person name="Viappiani C."/>
            <person name="Fago A."/>
            <person name="Bruno S."/>
            <person name="Smulevich G."/>
            <person name="Verde C."/>
        </authorList>
    </citation>
    <scope>PROTEIN SEQUENCE</scope>
    <scope>FUNCTION</scope>
    <scope>SUBUNIT</scope>
    <scope>TISSUE SPECIFICITY</scope>
    <scope>IDENTIFICATION BY MASS SPECTROMETRY</scope>
    <source>
        <tissue evidence="3">Erythrocyte</tissue>
    </source>
</reference>
<feature type="chain" id="PRO_0000443116" description="Hemoglobin subunit beta-1" evidence="2">
    <location>
        <begin position="1"/>
        <end position="128"/>
    </location>
</feature>
<feature type="domain" description="Globin" evidence="1">
    <location>
        <begin position="2"/>
        <end position="128"/>
    </location>
</feature>
<feature type="binding site" description="distal binding residue" evidence="1">
    <location>
        <position position="51"/>
    </location>
    <ligand>
        <name>heme b</name>
        <dbReference type="ChEBI" id="CHEBI:60344"/>
    </ligand>
    <ligandPart>
        <name>Fe</name>
        <dbReference type="ChEBI" id="CHEBI:18248"/>
    </ligandPart>
</feature>
<feature type="binding site" description="proximal binding residue" evidence="1">
    <location>
        <position position="74"/>
    </location>
    <ligand>
        <name>heme b</name>
        <dbReference type="ChEBI" id="CHEBI:60344"/>
    </ligand>
    <ligandPart>
        <name>Fe</name>
        <dbReference type="ChEBI" id="CHEBI:18248"/>
    </ligandPart>
</feature>
<feature type="non-consecutive residues" evidence="3">
    <location>
        <begin position="42"/>
        <end position="43"/>
    </location>
</feature>
<feature type="non-consecutive residues" evidence="3">
    <location>
        <begin position="72"/>
        <end position="73"/>
    </location>
</feature>
<sequence length="128" mass="14484">VHWTAEEKALVNVVWSKTDHQAVVANALGRLFVVYPWTKRYFAGDSAVQTHAGKVVSALTLAYNHIDDVKPHKHYEGFHVDPENFRLLANCLNVELGHTLHKEFTPELHAAWNKFSNVVVDALSKGYH</sequence>
<organism evidence="3">
    <name type="scientific">Somniosus microcephalus</name>
    <name type="common">Greenland sleeper shark</name>
    <name type="synonym">Squalus microcephalus</name>
    <dbReference type="NCBI Taxonomy" id="191813"/>
    <lineage>
        <taxon>Eukaryota</taxon>
        <taxon>Metazoa</taxon>
        <taxon>Chordata</taxon>
        <taxon>Craniata</taxon>
        <taxon>Vertebrata</taxon>
        <taxon>Chondrichthyes</taxon>
        <taxon>Elasmobranchii</taxon>
        <taxon>Squalomorphii</taxon>
        <taxon>Squaliformes</taxon>
        <taxon>Somniosidae</taxon>
        <taxon>Somniosus</taxon>
    </lineage>
</organism>
<comment type="function">
    <text evidence="2">Involved in oxygen transport from gills to the various peripheral tissues.</text>
</comment>
<comment type="subunit">
    <text evidence="2">Hb 1 is a heterotetramer of two alpha and two beta-1 chains.</text>
</comment>
<comment type="tissue specificity">
    <text evidence="2">Red blood cells (at protein level).</text>
</comment>
<comment type="miscellaneous">
    <text evidence="2">This fish has three hemoglobins: Hb 1, Hb 2 and Hb 3. They all have a similar Bohr effect.</text>
</comment>
<comment type="similarity">
    <text evidence="1">Belongs to the globin family.</text>
</comment>
<dbReference type="SMR" id="C0HJZ3"/>
<dbReference type="GO" id="GO:0072562">
    <property type="term" value="C:blood microparticle"/>
    <property type="evidence" value="ECO:0007669"/>
    <property type="project" value="TreeGrafter"/>
</dbReference>
<dbReference type="GO" id="GO:0031838">
    <property type="term" value="C:haptoglobin-hemoglobin complex"/>
    <property type="evidence" value="ECO:0007669"/>
    <property type="project" value="TreeGrafter"/>
</dbReference>
<dbReference type="GO" id="GO:0005833">
    <property type="term" value="C:hemoglobin complex"/>
    <property type="evidence" value="ECO:0007669"/>
    <property type="project" value="TreeGrafter"/>
</dbReference>
<dbReference type="GO" id="GO:0031720">
    <property type="term" value="F:haptoglobin binding"/>
    <property type="evidence" value="ECO:0007669"/>
    <property type="project" value="TreeGrafter"/>
</dbReference>
<dbReference type="GO" id="GO:0020037">
    <property type="term" value="F:heme binding"/>
    <property type="evidence" value="ECO:0007669"/>
    <property type="project" value="InterPro"/>
</dbReference>
<dbReference type="GO" id="GO:0046872">
    <property type="term" value="F:metal ion binding"/>
    <property type="evidence" value="ECO:0007669"/>
    <property type="project" value="UniProtKB-KW"/>
</dbReference>
<dbReference type="GO" id="GO:0043177">
    <property type="term" value="F:organic acid binding"/>
    <property type="evidence" value="ECO:0007669"/>
    <property type="project" value="TreeGrafter"/>
</dbReference>
<dbReference type="GO" id="GO:0019825">
    <property type="term" value="F:oxygen binding"/>
    <property type="evidence" value="ECO:0007669"/>
    <property type="project" value="InterPro"/>
</dbReference>
<dbReference type="GO" id="GO:0005344">
    <property type="term" value="F:oxygen carrier activity"/>
    <property type="evidence" value="ECO:0007669"/>
    <property type="project" value="UniProtKB-KW"/>
</dbReference>
<dbReference type="GO" id="GO:0004601">
    <property type="term" value="F:peroxidase activity"/>
    <property type="evidence" value="ECO:0007669"/>
    <property type="project" value="TreeGrafter"/>
</dbReference>
<dbReference type="GO" id="GO:0042744">
    <property type="term" value="P:hydrogen peroxide catabolic process"/>
    <property type="evidence" value="ECO:0007669"/>
    <property type="project" value="TreeGrafter"/>
</dbReference>
<dbReference type="Gene3D" id="1.10.490.10">
    <property type="entry name" value="Globins"/>
    <property type="match status" value="1"/>
</dbReference>
<dbReference type="InterPro" id="IPR000971">
    <property type="entry name" value="Globin"/>
</dbReference>
<dbReference type="InterPro" id="IPR009050">
    <property type="entry name" value="Globin-like_sf"/>
</dbReference>
<dbReference type="InterPro" id="IPR012292">
    <property type="entry name" value="Globin/Proto"/>
</dbReference>
<dbReference type="InterPro" id="IPR050056">
    <property type="entry name" value="Hemoglobin_oxygen_transport"/>
</dbReference>
<dbReference type="PANTHER" id="PTHR11442">
    <property type="entry name" value="HEMOGLOBIN FAMILY MEMBER"/>
    <property type="match status" value="1"/>
</dbReference>
<dbReference type="PANTHER" id="PTHR11442:SF100">
    <property type="entry name" value="HEMOGLOBIN SUBUNIT BETA-1"/>
    <property type="match status" value="1"/>
</dbReference>
<dbReference type="Pfam" id="PF00042">
    <property type="entry name" value="Globin"/>
    <property type="match status" value="1"/>
</dbReference>
<dbReference type="SUPFAM" id="SSF46458">
    <property type="entry name" value="Globin-like"/>
    <property type="match status" value="1"/>
</dbReference>
<dbReference type="PROSITE" id="PS01033">
    <property type="entry name" value="GLOBIN"/>
    <property type="match status" value="1"/>
</dbReference>
<accession>C0HJZ3</accession>
<keyword id="KW-0903">Direct protein sequencing</keyword>
<keyword id="KW-0349">Heme</keyword>
<keyword id="KW-0408">Iron</keyword>
<keyword id="KW-0479">Metal-binding</keyword>
<keyword id="KW-0561">Oxygen transport</keyword>
<keyword id="KW-0813">Transport</keyword>
<proteinExistence type="evidence at protein level"/>
<name>HBB1_SOMMI</name>
<protein>
    <recommendedName>
        <fullName evidence="5">Hemoglobin subunit beta-1</fullName>
    </recommendedName>
    <alternativeName>
        <fullName evidence="5">Beta-1-globin</fullName>
    </alternativeName>
    <alternativeName>
        <fullName evidence="3">Hemoglobin beta-1 chain</fullName>
    </alternativeName>
</protein>
<gene>
    <name evidence="5" type="primary">HBB1</name>
</gene>
<evidence type="ECO:0000255" key="1">
    <source>
        <dbReference type="PROSITE-ProRule" id="PRU00238"/>
    </source>
</evidence>
<evidence type="ECO:0000269" key="2">
    <source>
    </source>
</evidence>
<evidence type="ECO:0000303" key="3">
    <source>
    </source>
</evidence>
<evidence type="ECO:0000305" key="4"/>
<evidence type="ECO:0000305" key="5">
    <source>
    </source>
</evidence>